<gene>
    <name evidence="1" type="primary">flhD</name>
    <name type="ordered locus">Ent638_2470</name>
</gene>
<proteinExistence type="inferred from homology"/>
<name>FLHD_ENT38</name>
<comment type="function">
    <text evidence="1">Functions in complex with FlhC as a master transcriptional regulator that regulates transcription of several flagellar and non-flagellar operons by binding to their promoter region. Activates expression of class 2 flagellar genes, including fliA, which is a flagellum-specific sigma factor that turns on the class 3 genes. Also regulates genes whose products function in a variety of physiological pathways.</text>
</comment>
<comment type="subunit">
    <text evidence="1">Homodimer; disulfide-linked. Forms a heterohexamer composed of two FlhC and four FlhD subunits. Each FlhC binds a FlhD dimer, forming a heterotrimer, and a hexamer assembles by dimerization of two heterotrimers.</text>
</comment>
<comment type="subcellular location">
    <subcellularLocation>
        <location evidence="1">Cytoplasm</location>
    </subcellularLocation>
</comment>
<comment type="domain">
    <text evidence="1">The C-terminal region contains a putative helix-turn-helix (HTH) motif, suggesting that this region may bind DNA.</text>
</comment>
<comment type="similarity">
    <text evidence="1">Belongs to the FlhD family.</text>
</comment>
<keyword id="KW-0010">Activator</keyword>
<keyword id="KW-1005">Bacterial flagellum biogenesis</keyword>
<keyword id="KW-0963">Cytoplasm</keyword>
<keyword id="KW-1015">Disulfide bond</keyword>
<keyword id="KW-0238">DNA-binding</keyword>
<keyword id="KW-0804">Transcription</keyword>
<keyword id="KW-0805">Transcription regulation</keyword>
<reference key="1">
    <citation type="journal article" date="2010" name="PLoS Genet.">
        <title>Genome sequence of the plant growth promoting endophytic bacterium Enterobacter sp. 638.</title>
        <authorList>
            <person name="Taghavi S."/>
            <person name="van der Lelie D."/>
            <person name="Hoffman A."/>
            <person name="Zhang Y.B."/>
            <person name="Walla M.D."/>
            <person name="Vangronsveld J."/>
            <person name="Newman L."/>
            <person name="Monchy S."/>
        </authorList>
    </citation>
    <scope>NUCLEOTIDE SEQUENCE [LARGE SCALE GENOMIC DNA]</scope>
    <source>
        <strain>638</strain>
    </source>
</reference>
<organism>
    <name type="scientific">Enterobacter sp. (strain 638)</name>
    <dbReference type="NCBI Taxonomy" id="399742"/>
    <lineage>
        <taxon>Bacteria</taxon>
        <taxon>Pseudomonadati</taxon>
        <taxon>Pseudomonadota</taxon>
        <taxon>Gammaproteobacteria</taxon>
        <taxon>Enterobacterales</taxon>
        <taxon>Enterobacteriaceae</taxon>
        <taxon>Enterobacter</taxon>
    </lineage>
</organism>
<feature type="chain" id="PRO_1000132687" description="Flagellar transcriptional regulator FlhD">
    <location>
        <begin position="1"/>
        <end position="119"/>
    </location>
</feature>
<feature type="disulfide bond" description="Interchain" evidence="1">
    <location>
        <position position="68"/>
    </location>
</feature>
<sequence>MGKMHTSEMLKHVYDINLSYLLLAQRLISQDKPSAMFRLGISEEMATTLGGLTLPQMVKLAETNQLVCQFRFDSHQTITRLTQDSRVDDLQQIHTGILLSTRLLTEVSQTDEVARKKRA</sequence>
<protein>
    <recommendedName>
        <fullName evidence="1">Flagellar transcriptional regulator FlhD</fullName>
    </recommendedName>
</protein>
<evidence type="ECO:0000255" key="1">
    <source>
        <dbReference type="HAMAP-Rule" id="MF_00725"/>
    </source>
</evidence>
<accession>A4WBQ9</accession>
<dbReference type="EMBL" id="CP000653">
    <property type="protein sequence ID" value="ABP61139.1"/>
    <property type="molecule type" value="Genomic_DNA"/>
</dbReference>
<dbReference type="SMR" id="A4WBQ9"/>
<dbReference type="STRING" id="399742.Ent638_2470"/>
<dbReference type="KEGG" id="ent:Ent638_2470"/>
<dbReference type="eggNOG" id="ENOG5031P80">
    <property type="taxonomic scope" value="Bacteria"/>
</dbReference>
<dbReference type="HOGENOM" id="CLU_144160_0_0_6"/>
<dbReference type="OrthoDB" id="5298036at2"/>
<dbReference type="Proteomes" id="UP000000230">
    <property type="component" value="Chromosome"/>
</dbReference>
<dbReference type="GO" id="GO:0005737">
    <property type="term" value="C:cytoplasm"/>
    <property type="evidence" value="ECO:0007669"/>
    <property type="project" value="UniProtKB-SubCell"/>
</dbReference>
<dbReference type="GO" id="GO:0003677">
    <property type="term" value="F:DNA binding"/>
    <property type="evidence" value="ECO:0007669"/>
    <property type="project" value="UniProtKB-UniRule"/>
</dbReference>
<dbReference type="GO" id="GO:0044780">
    <property type="term" value="P:bacterial-type flagellum assembly"/>
    <property type="evidence" value="ECO:0007669"/>
    <property type="project" value="InterPro"/>
</dbReference>
<dbReference type="GO" id="GO:0045893">
    <property type="term" value="P:positive regulation of DNA-templated transcription"/>
    <property type="evidence" value="ECO:0007669"/>
    <property type="project" value="InterPro"/>
</dbReference>
<dbReference type="GO" id="GO:1902208">
    <property type="term" value="P:regulation of bacterial-type flagellum assembly"/>
    <property type="evidence" value="ECO:0007669"/>
    <property type="project" value="UniProtKB-UniRule"/>
</dbReference>
<dbReference type="Gene3D" id="1.10.4000.10">
    <property type="entry name" value="Flagellar transcriptional activator FlhD"/>
    <property type="match status" value="1"/>
</dbReference>
<dbReference type="HAMAP" id="MF_00725">
    <property type="entry name" value="FlhD"/>
    <property type="match status" value="1"/>
</dbReference>
<dbReference type="InterPro" id="IPR023559">
    <property type="entry name" value="Flagellar_FlhD"/>
</dbReference>
<dbReference type="InterPro" id="IPR036194">
    <property type="entry name" value="FlhD_sf"/>
</dbReference>
<dbReference type="NCBIfam" id="NF002783">
    <property type="entry name" value="PRK02909.1-1"/>
    <property type="match status" value="1"/>
</dbReference>
<dbReference type="Pfam" id="PF05247">
    <property type="entry name" value="FlhD"/>
    <property type="match status" value="1"/>
</dbReference>
<dbReference type="SUPFAM" id="SSF63592">
    <property type="entry name" value="Flagellar transcriptional activator FlhD"/>
    <property type="match status" value="1"/>
</dbReference>